<evidence type="ECO:0000255" key="1">
    <source>
        <dbReference type="HAMAP-Rule" id="MF_01643"/>
    </source>
</evidence>
<evidence type="ECO:0000305" key="2"/>
<protein>
    <recommendedName>
        <fullName evidence="1">Formate-dependent phosphoribosylglycinamide formyltransferase</fullName>
        <ecNumber evidence="1">6.3.1.21</ecNumber>
    </recommendedName>
    <alternativeName>
        <fullName evidence="1">5'-phosphoribosylglycinamide transformylase 2</fullName>
    </alternativeName>
    <alternativeName>
        <fullName evidence="1">Formate-dependent GAR transformylase</fullName>
    </alternativeName>
    <alternativeName>
        <fullName evidence="1">GAR transformylase 2</fullName>
        <shortName evidence="1">GART 2</shortName>
    </alternativeName>
    <alternativeName>
        <fullName evidence="1">Non-folate glycinamide ribonucleotide transformylase</fullName>
    </alternativeName>
    <alternativeName>
        <fullName evidence="1">Phosphoribosylglycinamide formyltransferase 2</fullName>
    </alternativeName>
</protein>
<reference key="1">
    <citation type="journal article" date="2004" name="Nat. Biotechnol.">
        <title>The genome sequence of the capnophilic rumen bacterium Mannheimia succiniciproducens.</title>
        <authorList>
            <person name="Hong S.H."/>
            <person name="Kim J.S."/>
            <person name="Lee S.Y."/>
            <person name="In Y.H."/>
            <person name="Choi S.S."/>
            <person name="Rih J.-K."/>
            <person name="Kim C.H."/>
            <person name="Jeong H."/>
            <person name="Hur C.G."/>
            <person name="Kim J.J."/>
        </authorList>
    </citation>
    <scope>NUCLEOTIDE SEQUENCE [LARGE SCALE GENOMIC DNA]</scope>
    <source>
        <strain>KCTC 0769BP / MBEL55E</strain>
    </source>
</reference>
<comment type="function">
    <text evidence="1">Involved in the de novo purine biosynthesis. Catalyzes the transfer of formate to 5-phospho-ribosyl-glycinamide (GAR), producing 5-phospho-ribosyl-N-formylglycinamide (FGAR). Formate is provided by PurU via hydrolysis of 10-formyl-tetrahydrofolate.</text>
</comment>
<comment type="catalytic activity">
    <reaction evidence="1">
        <text>N(1)-(5-phospho-beta-D-ribosyl)glycinamide + formate + ATP = N(2)-formyl-N(1)-(5-phospho-beta-D-ribosyl)glycinamide + ADP + phosphate + H(+)</text>
        <dbReference type="Rhea" id="RHEA:24829"/>
        <dbReference type="ChEBI" id="CHEBI:15378"/>
        <dbReference type="ChEBI" id="CHEBI:15740"/>
        <dbReference type="ChEBI" id="CHEBI:30616"/>
        <dbReference type="ChEBI" id="CHEBI:43474"/>
        <dbReference type="ChEBI" id="CHEBI:143788"/>
        <dbReference type="ChEBI" id="CHEBI:147286"/>
        <dbReference type="ChEBI" id="CHEBI:456216"/>
        <dbReference type="EC" id="6.3.1.21"/>
    </reaction>
    <physiologicalReaction direction="left-to-right" evidence="1">
        <dbReference type="Rhea" id="RHEA:24830"/>
    </physiologicalReaction>
</comment>
<comment type="pathway">
    <text evidence="1">Purine metabolism; IMP biosynthesis via de novo pathway; N(2)-formyl-N(1)-(5-phospho-D-ribosyl)glycinamide from N(1)-(5-phospho-D-ribosyl)glycinamide (formate route): step 1/1.</text>
</comment>
<comment type="subunit">
    <text evidence="1">Homodimer.</text>
</comment>
<comment type="similarity">
    <text evidence="1">Belongs to the PurK/PurT family.</text>
</comment>
<comment type="sequence caution" evidence="2">
    <conflict type="erroneous initiation">
        <sequence resource="EMBL-CDS" id="AAU37027"/>
    </conflict>
</comment>
<sequence>MTTLGTALTPKATKVMMLGSGELGKEVVIELQRLGVEVIAVDRYKNAPAQQVAHRSYTISMLDGEALKALVEKERPDYIVPEVEAIATATLVELEQKGFTVVPTAKATQLTMNREGIRRLAAEELGLPTSNYQFVDNFTDFKSAVENIGIPCVVKPIMSSSGHGQSIIKSFDQIQQAWDYAQQGGRAGAGRVIVEGFVKFDYEITLLTVRHIGGTSFLAPIGHRQQNGDYRESWQPQAMSEIALQKAQQVAEKITSALGGRGIFGVEMFVCGDEVIFNEVSPRPHDTGMVTLISQELSEFALHARAILGLPIPEINLISPAASKAIVVEGKSTQVQFGNLEQVLAEPNTNIRLFGKTEVDGHRRMGVILSRDISVEKALEKAFRAYDKLEINL</sequence>
<accession>Q65VI3</accession>
<feature type="chain" id="PRO_0000319184" description="Formate-dependent phosphoribosylglycinamide formyltransferase">
    <location>
        <begin position="1"/>
        <end position="393"/>
    </location>
</feature>
<feature type="domain" description="ATP-grasp" evidence="1">
    <location>
        <begin position="119"/>
        <end position="308"/>
    </location>
</feature>
<feature type="binding site" evidence="1">
    <location>
        <begin position="22"/>
        <end position="23"/>
    </location>
    <ligand>
        <name>N(1)-(5-phospho-beta-D-ribosyl)glycinamide</name>
        <dbReference type="ChEBI" id="CHEBI:143788"/>
    </ligand>
</feature>
<feature type="binding site" evidence="1">
    <location>
        <position position="82"/>
    </location>
    <ligand>
        <name>N(1)-(5-phospho-beta-D-ribosyl)glycinamide</name>
        <dbReference type="ChEBI" id="CHEBI:143788"/>
    </ligand>
</feature>
<feature type="binding site" evidence="1">
    <location>
        <position position="114"/>
    </location>
    <ligand>
        <name>ATP</name>
        <dbReference type="ChEBI" id="CHEBI:30616"/>
    </ligand>
</feature>
<feature type="binding site" evidence="1">
    <location>
        <position position="155"/>
    </location>
    <ligand>
        <name>ATP</name>
        <dbReference type="ChEBI" id="CHEBI:30616"/>
    </ligand>
</feature>
<feature type="binding site" evidence="1">
    <location>
        <begin position="160"/>
        <end position="165"/>
    </location>
    <ligand>
        <name>ATP</name>
        <dbReference type="ChEBI" id="CHEBI:30616"/>
    </ligand>
</feature>
<feature type="binding site" evidence="1">
    <location>
        <begin position="195"/>
        <end position="198"/>
    </location>
    <ligand>
        <name>ATP</name>
        <dbReference type="ChEBI" id="CHEBI:30616"/>
    </ligand>
</feature>
<feature type="binding site" evidence="1">
    <location>
        <position position="203"/>
    </location>
    <ligand>
        <name>ATP</name>
        <dbReference type="ChEBI" id="CHEBI:30616"/>
    </ligand>
</feature>
<feature type="binding site" evidence="1">
    <location>
        <position position="267"/>
    </location>
    <ligand>
        <name>Mg(2+)</name>
        <dbReference type="ChEBI" id="CHEBI:18420"/>
    </ligand>
</feature>
<feature type="binding site" evidence="1">
    <location>
        <position position="279"/>
    </location>
    <ligand>
        <name>Mg(2+)</name>
        <dbReference type="ChEBI" id="CHEBI:18420"/>
    </ligand>
</feature>
<feature type="binding site" evidence="1">
    <location>
        <position position="286"/>
    </location>
    <ligand>
        <name>N(1)-(5-phospho-beta-D-ribosyl)glycinamide</name>
        <dbReference type="ChEBI" id="CHEBI:143788"/>
    </ligand>
</feature>
<feature type="binding site" evidence="1">
    <location>
        <position position="356"/>
    </location>
    <ligand>
        <name>N(1)-(5-phospho-beta-D-ribosyl)glycinamide</name>
        <dbReference type="ChEBI" id="CHEBI:143788"/>
    </ligand>
</feature>
<feature type="binding site" evidence="1">
    <location>
        <begin position="363"/>
        <end position="364"/>
    </location>
    <ligand>
        <name>N(1)-(5-phospho-beta-D-ribosyl)glycinamide</name>
        <dbReference type="ChEBI" id="CHEBI:143788"/>
    </ligand>
</feature>
<organism>
    <name type="scientific">Mannheimia succiniciproducens (strain KCTC 0769BP / MBEL55E)</name>
    <dbReference type="NCBI Taxonomy" id="221988"/>
    <lineage>
        <taxon>Bacteria</taxon>
        <taxon>Pseudomonadati</taxon>
        <taxon>Pseudomonadota</taxon>
        <taxon>Gammaproteobacteria</taxon>
        <taxon>Pasteurellales</taxon>
        <taxon>Pasteurellaceae</taxon>
        <taxon>Basfia</taxon>
    </lineage>
</organism>
<keyword id="KW-0067">ATP-binding</keyword>
<keyword id="KW-0436">Ligase</keyword>
<keyword id="KW-0460">Magnesium</keyword>
<keyword id="KW-0479">Metal-binding</keyword>
<keyword id="KW-0547">Nucleotide-binding</keyword>
<keyword id="KW-0658">Purine biosynthesis</keyword>
<dbReference type="EC" id="6.3.1.21" evidence="1"/>
<dbReference type="EMBL" id="AE016827">
    <property type="protein sequence ID" value="AAU37027.1"/>
    <property type="status" value="ALT_INIT"/>
    <property type="molecule type" value="Genomic_DNA"/>
</dbReference>
<dbReference type="RefSeq" id="WP_041639520.1">
    <property type="nucleotide sequence ID" value="NC_006300.1"/>
</dbReference>
<dbReference type="SMR" id="Q65VI3"/>
<dbReference type="STRING" id="221988.MS0420"/>
<dbReference type="KEGG" id="msu:MS0420"/>
<dbReference type="eggNOG" id="COG0027">
    <property type="taxonomic scope" value="Bacteria"/>
</dbReference>
<dbReference type="HOGENOM" id="CLU_011534_1_3_6"/>
<dbReference type="OrthoDB" id="9804625at2"/>
<dbReference type="UniPathway" id="UPA00074">
    <property type="reaction ID" value="UER00127"/>
</dbReference>
<dbReference type="Proteomes" id="UP000000607">
    <property type="component" value="Chromosome"/>
</dbReference>
<dbReference type="GO" id="GO:0005829">
    <property type="term" value="C:cytosol"/>
    <property type="evidence" value="ECO:0007669"/>
    <property type="project" value="TreeGrafter"/>
</dbReference>
<dbReference type="GO" id="GO:0005524">
    <property type="term" value="F:ATP binding"/>
    <property type="evidence" value="ECO:0007669"/>
    <property type="project" value="UniProtKB-UniRule"/>
</dbReference>
<dbReference type="GO" id="GO:0000287">
    <property type="term" value="F:magnesium ion binding"/>
    <property type="evidence" value="ECO:0007669"/>
    <property type="project" value="InterPro"/>
</dbReference>
<dbReference type="GO" id="GO:0043815">
    <property type="term" value="F:phosphoribosylglycinamide formyltransferase 2 activity"/>
    <property type="evidence" value="ECO:0007669"/>
    <property type="project" value="UniProtKB-UniRule"/>
</dbReference>
<dbReference type="GO" id="GO:0004644">
    <property type="term" value="F:phosphoribosylglycinamide formyltransferase activity"/>
    <property type="evidence" value="ECO:0007669"/>
    <property type="project" value="InterPro"/>
</dbReference>
<dbReference type="GO" id="GO:0006189">
    <property type="term" value="P:'de novo' IMP biosynthetic process"/>
    <property type="evidence" value="ECO:0007669"/>
    <property type="project" value="UniProtKB-UniRule"/>
</dbReference>
<dbReference type="FunFam" id="3.30.1490.20:FF:000013">
    <property type="entry name" value="Formate-dependent phosphoribosylglycinamide formyltransferase"/>
    <property type="match status" value="1"/>
</dbReference>
<dbReference type="FunFam" id="3.30.470.20:FF:000027">
    <property type="entry name" value="Formate-dependent phosphoribosylglycinamide formyltransferase"/>
    <property type="match status" value="1"/>
</dbReference>
<dbReference type="FunFam" id="3.40.50.20:FF:000007">
    <property type="entry name" value="Formate-dependent phosphoribosylglycinamide formyltransferase"/>
    <property type="match status" value="1"/>
</dbReference>
<dbReference type="Gene3D" id="3.40.50.20">
    <property type="match status" value="1"/>
</dbReference>
<dbReference type="Gene3D" id="3.30.1490.20">
    <property type="entry name" value="ATP-grasp fold, A domain"/>
    <property type="match status" value="1"/>
</dbReference>
<dbReference type="Gene3D" id="3.30.470.20">
    <property type="entry name" value="ATP-grasp fold, B domain"/>
    <property type="match status" value="1"/>
</dbReference>
<dbReference type="HAMAP" id="MF_01643">
    <property type="entry name" value="PurT"/>
    <property type="match status" value="1"/>
</dbReference>
<dbReference type="InterPro" id="IPR011761">
    <property type="entry name" value="ATP-grasp"/>
</dbReference>
<dbReference type="InterPro" id="IPR003135">
    <property type="entry name" value="ATP-grasp_carboxylate-amine"/>
</dbReference>
<dbReference type="InterPro" id="IPR013815">
    <property type="entry name" value="ATP_grasp_subdomain_1"/>
</dbReference>
<dbReference type="InterPro" id="IPR016185">
    <property type="entry name" value="PreATP-grasp_dom_sf"/>
</dbReference>
<dbReference type="InterPro" id="IPR005862">
    <property type="entry name" value="PurT"/>
</dbReference>
<dbReference type="InterPro" id="IPR054350">
    <property type="entry name" value="PurT/PurK_preATP-grasp"/>
</dbReference>
<dbReference type="InterPro" id="IPR048740">
    <property type="entry name" value="PurT_C"/>
</dbReference>
<dbReference type="NCBIfam" id="NF006766">
    <property type="entry name" value="PRK09288.1"/>
    <property type="match status" value="1"/>
</dbReference>
<dbReference type="NCBIfam" id="TIGR01142">
    <property type="entry name" value="purT"/>
    <property type="match status" value="1"/>
</dbReference>
<dbReference type="PANTHER" id="PTHR43055">
    <property type="entry name" value="FORMATE-DEPENDENT PHOSPHORIBOSYLGLYCINAMIDE FORMYLTRANSFERASE"/>
    <property type="match status" value="1"/>
</dbReference>
<dbReference type="PANTHER" id="PTHR43055:SF1">
    <property type="entry name" value="FORMATE-DEPENDENT PHOSPHORIBOSYLGLYCINAMIDE FORMYLTRANSFERASE"/>
    <property type="match status" value="1"/>
</dbReference>
<dbReference type="Pfam" id="PF02222">
    <property type="entry name" value="ATP-grasp"/>
    <property type="match status" value="1"/>
</dbReference>
<dbReference type="Pfam" id="PF21244">
    <property type="entry name" value="PurT_C"/>
    <property type="match status" value="1"/>
</dbReference>
<dbReference type="Pfam" id="PF22660">
    <property type="entry name" value="RS_preATP-grasp-like"/>
    <property type="match status" value="1"/>
</dbReference>
<dbReference type="SUPFAM" id="SSF56059">
    <property type="entry name" value="Glutathione synthetase ATP-binding domain-like"/>
    <property type="match status" value="1"/>
</dbReference>
<dbReference type="SUPFAM" id="SSF52440">
    <property type="entry name" value="PreATP-grasp domain"/>
    <property type="match status" value="1"/>
</dbReference>
<dbReference type="PROSITE" id="PS50975">
    <property type="entry name" value="ATP_GRASP"/>
    <property type="match status" value="1"/>
</dbReference>
<name>PURT_MANSM</name>
<gene>
    <name evidence="1" type="primary">purT</name>
    <name type="ordered locus">MS0420</name>
</gene>
<proteinExistence type="inferred from homology"/>